<sequence length="132" mass="14039">MTAGAGGSPPTRRCPATEDRAPATVATPSSADPTASRAVSWWSVHEHVAPVLDAAGSWPMAGTPAWRQLDDADPRKWAAICDAARHWALRVETCQEAMAQASRDVSAAADWPGIAREIVRRRGVYIPRAGVA</sequence>
<organism>
    <name type="scientific">Mycobacterium tuberculosis (strain ATCC 25618 / H37Rv)</name>
    <dbReference type="NCBI Taxonomy" id="83332"/>
    <lineage>
        <taxon>Bacteria</taxon>
        <taxon>Bacillati</taxon>
        <taxon>Actinomycetota</taxon>
        <taxon>Actinomycetes</taxon>
        <taxon>Mycobacteriales</taxon>
        <taxon>Mycobacteriaceae</taxon>
        <taxon>Mycobacterium</taxon>
        <taxon>Mycobacterium tuberculosis complex</taxon>
    </lineage>
</organism>
<dbReference type="EMBL" id="AL123456">
    <property type="protein sequence ID" value="CCP44347.1"/>
    <property type="molecule type" value="Genomic_DNA"/>
</dbReference>
<dbReference type="PIR" id="A70542">
    <property type="entry name" value="A70542"/>
</dbReference>
<dbReference type="RefSeq" id="NP_216099.1">
    <property type="nucleotide sequence ID" value="NC_000962.3"/>
</dbReference>
<dbReference type="RefSeq" id="WP_003900695.1">
    <property type="nucleotide sequence ID" value="NZ_NVQJ01000004.1"/>
</dbReference>
<dbReference type="STRING" id="83332.Rv1583c"/>
<dbReference type="PaxDb" id="83332-Rv1583c"/>
<dbReference type="GeneID" id="886315"/>
<dbReference type="KEGG" id="mtu:Rv1583c"/>
<dbReference type="KEGG" id="mtv:RVBD_1583c"/>
<dbReference type="TubercuList" id="Rv1583c"/>
<dbReference type="eggNOG" id="ENOG5031Z26">
    <property type="taxonomic scope" value="Bacteria"/>
</dbReference>
<dbReference type="InParanoid" id="P9WLU1"/>
<dbReference type="OrthoDB" id="4374214at2"/>
<dbReference type="Proteomes" id="UP000001584">
    <property type="component" value="Chromosome"/>
</dbReference>
<dbReference type="InterPro" id="IPR024384">
    <property type="entry name" value="DUF2742"/>
</dbReference>
<dbReference type="Pfam" id="PF10888">
    <property type="entry name" value="DUF2742"/>
    <property type="match status" value="1"/>
</dbReference>
<comment type="similarity">
    <text evidence="2">To M.tuberculosis Rv2656c.</text>
</comment>
<feature type="chain" id="PRO_0000103885" description="Uncharacterized protein Rv1583c">
    <location>
        <begin position="1"/>
        <end position="132"/>
    </location>
</feature>
<feature type="region of interest" description="Disordered" evidence="1">
    <location>
        <begin position="1"/>
        <end position="34"/>
    </location>
</feature>
<name>Y1583_MYCTU</name>
<gene>
    <name type="ordered locus">Rv1583c</name>
    <name type="ORF">MTCY336.21</name>
</gene>
<evidence type="ECO:0000256" key="1">
    <source>
        <dbReference type="SAM" id="MobiDB-lite"/>
    </source>
</evidence>
<evidence type="ECO:0000305" key="2"/>
<accession>P9WLU1</accession>
<accession>L0T797</accession>
<accession>O06607</accession>
<protein>
    <recommendedName>
        <fullName>Uncharacterized protein Rv1583c</fullName>
    </recommendedName>
</protein>
<proteinExistence type="predicted"/>
<reference key="1">
    <citation type="journal article" date="1998" name="Nature">
        <title>Deciphering the biology of Mycobacterium tuberculosis from the complete genome sequence.</title>
        <authorList>
            <person name="Cole S.T."/>
            <person name="Brosch R."/>
            <person name="Parkhill J."/>
            <person name="Garnier T."/>
            <person name="Churcher C.M."/>
            <person name="Harris D.E."/>
            <person name="Gordon S.V."/>
            <person name="Eiglmeier K."/>
            <person name="Gas S."/>
            <person name="Barry C.E. III"/>
            <person name="Tekaia F."/>
            <person name="Badcock K."/>
            <person name="Basham D."/>
            <person name="Brown D."/>
            <person name="Chillingworth T."/>
            <person name="Connor R."/>
            <person name="Davies R.M."/>
            <person name="Devlin K."/>
            <person name="Feltwell T."/>
            <person name="Gentles S."/>
            <person name="Hamlin N."/>
            <person name="Holroyd S."/>
            <person name="Hornsby T."/>
            <person name="Jagels K."/>
            <person name="Krogh A."/>
            <person name="McLean J."/>
            <person name="Moule S."/>
            <person name="Murphy L.D."/>
            <person name="Oliver S."/>
            <person name="Osborne J."/>
            <person name="Quail M.A."/>
            <person name="Rajandream M.A."/>
            <person name="Rogers J."/>
            <person name="Rutter S."/>
            <person name="Seeger K."/>
            <person name="Skelton S."/>
            <person name="Squares S."/>
            <person name="Squares R."/>
            <person name="Sulston J.E."/>
            <person name="Taylor K."/>
            <person name="Whitehead S."/>
            <person name="Barrell B.G."/>
        </authorList>
    </citation>
    <scope>NUCLEOTIDE SEQUENCE [LARGE SCALE GENOMIC DNA]</scope>
    <source>
        <strain>ATCC 25618 / H37Rv</strain>
    </source>
</reference>
<keyword id="KW-1185">Reference proteome</keyword>